<reference key="1">
    <citation type="journal article" date="2002" name="Nucleic Acids Res.">
        <title>The complete genomic sequence of Mycoplasma penetrans, an intracellular bacterial pathogen in humans.</title>
        <authorList>
            <person name="Sasaki Y."/>
            <person name="Ishikawa J."/>
            <person name="Yamashita A."/>
            <person name="Oshima K."/>
            <person name="Kenri T."/>
            <person name="Furuya K."/>
            <person name="Yoshino C."/>
            <person name="Horino A."/>
            <person name="Shiba T."/>
            <person name="Sasaki T."/>
            <person name="Hattori M."/>
        </authorList>
    </citation>
    <scope>NUCLEOTIDE SEQUENCE [LARGE SCALE GENOMIC DNA]</scope>
    <source>
        <strain>HF-2</strain>
    </source>
</reference>
<gene>
    <name evidence="1" type="primary">tsaD</name>
    <name type="synonym">gcp</name>
    <name type="ordered locus">MYPE8610</name>
</gene>
<protein>
    <recommendedName>
        <fullName evidence="1">tRNA N6-adenosine threonylcarbamoyltransferase</fullName>
        <ecNumber evidence="1">2.3.1.234</ecNumber>
    </recommendedName>
    <alternativeName>
        <fullName evidence="1">N6-L-threonylcarbamoyladenine synthase</fullName>
        <shortName evidence="1">t(6)A synthase</shortName>
    </alternativeName>
    <alternativeName>
        <fullName evidence="1">t(6)A37 threonylcarbamoyladenosine biosynthesis protein TsaD</fullName>
    </alternativeName>
    <alternativeName>
        <fullName evidence="1">tRNA threonylcarbamoyladenosine biosynthesis protein TsaD</fullName>
    </alternativeName>
</protein>
<dbReference type="EC" id="2.3.1.234" evidence="1"/>
<dbReference type="EMBL" id="BA000026">
    <property type="protein sequence ID" value="BAC44653.1"/>
    <property type="status" value="ALT_INIT"/>
    <property type="molecule type" value="Genomic_DNA"/>
</dbReference>
<dbReference type="RefSeq" id="WP_052270431.1">
    <property type="nucleotide sequence ID" value="NC_004432.1"/>
</dbReference>
<dbReference type="SMR" id="Q8EUQ9"/>
<dbReference type="FunCoup" id="Q8EUQ9">
    <property type="interactions" value="280"/>
</dbReference>
<dbReference type="STRING" id="272633.gene:10731983"/>
<dbReference type="KEGG" id="mpe:MYPE8610"/>
<dbReference type="eggNOG" id="COG0533">
    <property type="taxonomic scope" value="Bacteria"/>
</dbReference>
<dbReference type="HOGENOM" id="CLU_023208_0_1_14"/>
<dbReference type="InParanoid" id="Q8EUQ9"/>
<dbReference type="Proteomes" id="UP000002522">
    <property type="component" value="Chromosome"/>
</dbReference>
<dbReference type="GO" id="GO:0005737">
    <property type="term" value="C:cytoplasm"/>
    <property type="evidence" value="ECO:0007669"/>
    <property type="project" value="UniProtKB-SubCell"/>
</dbReference>
<dbReference type="GO" id="GO:0005506">
    <property type="term" value="F:iron ion binding"/>
    <property type="evidence" value="ECO:0007669"/>
    <property type="project" value="UniProtKB-UniRule"/>
</dbReference>
<dbReference type="GO" id="GO:0061711">
    <property type="term" value="F:N(6)-L-threonylcarbamoyladenine synthase activity"/>
    <property type="evidence" value="ECO:0007669"/>
    <property type="project" value="UniProtKB-EC"/>
</dbReference>
<dbReference type="GO" id="GO:0002949">
    <property type="term" value="P:tRNA threonylcarbamoyladenosine modification"/>
    <property type="evidence" value="ECO:0007669"/>
    <property type="project" value="UniProtKB-UniRule"/>
</dbReference>
<dbReference type="Gene3D" id="3.30.420.40">
    <property type="match status" value="2"/>
</dbReference>
<dbReference type="HAMAP" id="MF_01445">
    <property type="entry name" value="TsaD"/>
    <property type="match status" value="1"/>
</dbReference>
<dbReference type="InterPro" id="IPR043129">
    <property type="entry name" value="ATPase_NBD"/>
</dbReference>
<dbReference type="InterPro" id="IPR000905">
    <property type="entry name" value="Gcp-like_dom"/>
</dbReference>
<dbReference type="InterPro" id="IPR017861">
    <property type="entry name" value="KAE1/TsaD"/>
</dbReference>
<dbReference type="InterPro" id="IPR022450">
    <property type="entry name" value="TsaD"/>
</dbReference>
<dbReference type="NCBIfam" id="TIGR00329">
    <property type="entry name" value="gcp_kae1"/>
    <property type="match status" value="1"/>
</dbReference>
<dbReference type="NCBIfam" id="TIGR03723">
    <property type="entry name" value="T6A_TsaD_YgjD"/>
    <property type="match status" value="1"/>
</dbReference>
<dbReference type="PANTHER" id="PTHR11735">
    <property type="entry name" value="TRNA N6-ADENOSINE THREONYLCARBAMOYLTRANSFERASE"/>
    <property type="match status" value="1"/>
</dbReference>
<dbReference type="PANTHER" id="PTHR11735:SF6">
    <property type="entry name" value="TRNA N6-ADENOSINE THREONYLCARBAMOYLTRANSFERASE, MITOCHONDRIAL"/>
    <property type="match status" value="1"/>
</dbReference>
<dbReference type="Pfam" id="PF00814">
    <property type="entry name" value="TsaD"/>
    <property type="match status" value="1"/>
</dbReference>
<dbReference type="PRINTS" id="PR00789">
    <property type="entry name" value="OSIALOPTASE"/>
</dbReference>
<dbReference type="SUPFAM" id="SSF53067">
    <property type="entry name" value="Actin-like ATPase domain"/>
    <property type="match status" value="1"/>
</dbReference>
<evidence type="ECO:0000255" key="1">
    <source>
        <dbReference type="HAMAP-Rule" id="MF_01445"/>
    </source>
</evidence>
<evidence type="ECO:0000305" key="2"/>
<sequence length="306" mass="34040">MYILSIETSCDDTSVAILEDNKVLSCIIKNDSKQLNPFGGIVPEIVARYHEENIIKALDLALQESNISLNQIDKVAYTNQPGLPGSLFVGEIFAKTMAYALDVECVPINHIHGHILSPFINSVPKYPFMSLIASGKTTSIFLVKSANEIIELTKTRDDAIGEIFDKVGKALGYDYPAGPKLDKYFDISKATITPSFPPVKNDFSFSGIKNKFLSIINSSKMKNEEIDTITIGSSFLKYSIDLIIKKLKYYKDEYSVDCVCIGGGVANNNYFKQEIKKLFSDSFVPESKYSTDNAAMIGFAYYEKNK</sequence>
<comment type="function">
    <text evidence="1">Required for the formation of a threonylcarbamoyl group on adenosine at position 37 (t(6)A37) in tRNAs that read codons beginning with adenine. Is involved in the transfer of the threonylcarbamoyl moiety of threonylcarbamoyl-AMP (TC-AMP) to the N6 group of A37, together with TsaE and TsaB. TsaD likely plays a direct catalytic role in this reaction.</text>
</comment>
<comment type="catalytic activity">
    <reaction evidence="1">
        <text>L-threonylcarbamoyladenylate + adenosine(37) in tRNA = N(6)-L-threonylcarbamoyladenosine(37) in tRNA + AMP + H(+)</text>
        <dbReference type="Rhea" id="RHEA:37059"/>
        <dbReference type="Rhea" id="RHEA-COMP:10162"/>
        <dbReference type="Rhea" id="RHEA-COMP:10163"/>
        <dbReference type="ChEBI" id="CHEBI:15378"/>
        <dbReference type="ChEBI" id="CHEBI:73682"/>
        <dbReference type="ChEBI" id="CHEBI:74411"/>
        <dbReference type="ChEBI" id="CHEBI:74418"/>
        <dbReference type="ChEBI" id="CHEBI:456215"/>
        <dbReference type="EC" id="2.3.1.234"/>
    </reaction>
</comment>
<comment type="cofactor">
    <cofactor evidence="1">
        <name>Fe(2+)</name>
        <dbReference type="ChEBI" id="CHEBI:29033"/>
    </cofactor>
    <text evidence="1">Binds 1 Fe(2+) ion per subunit.</text>
</comment>
<comment type="subcellular location">
    <subcellularLocation>
        <location evidence="1">Cytoplasm</location>
    </subcellularLocation>
</comment>
<comment type="similarity">
    <text evidence="1">Belongs to the KAE1 / TsaD family.</text>
</comment>
<comment type="sequence caution" evidence="2">
    <conflict type="erroneous initiation">
        <sequence resource="EMBL-CDS" id="BAC44653"/>
    </conflict>
</comment>
<keyword id="KW-0012">Acyltransferase</keyword>
<keyword id="KW-0963">Cytoplasm</keyword>
<keyword id="KW-0408">Iron</keyword>
<keyword id="KW-0479">Metal-binding</keyword>
<keyword id="KW-1185">Reference proteome</keyword>
<keyword id="KW-0808">Transferase</keyword>
<keyword id="KW-0819">tRNA processing</keyword>
<feature type="chain" id="PRO_0000303444" description="tRNA N6-adenosine threonylcarbamoyltransferase">
    <location>
        <begin position="1"/>
        <end position="306"/>
    </location>
</feature>
<feature type="binding site" evidence="1">
    <location>
        <position position="110"/>
    </location>
    <ligand>
        <name>Fe cation</name>
        <dbReference type="ChEBI" id="CHEBI:24875"/>
    </ligand>
</feature>
<feature type="binding site" evidence="1">
    <location>
        <position position="114"/>
    </location>
    <ligand>
        <name>Fe cation</name>
        <dbReference type="ChEBI" id="CHEBI:24875"/>
    </ligand>
</feature>
<feature type="binding site" evidence="1">
    <location>
        <begin position="132"/>
        <end position="136"/>
    </location>
    <ligand>
        <name>substrate</name>
    </ligand>
</feature>
<feature type="binding site" evidence="1">
    <location>
        <position position="165"/>
    </location>
    <ligand>
        <name>substrate</name>
    </ligand>
</feature>
<feature type="binding site" evidence="1">
    <location>
        <position position="178"/>
    </location>
    <ligand>
        <name>substrate</name>
    </ligand>
</feature>
<feature type="binding site" evidence="1">
    <location>
        <position position="182"/>
    </location>
    <ligand>
        <name>substrate</name>
    </ligand>
</feature>
<feature type="binding site" evidence="1">
    <location>
        <position position="268"/>
    </location>
    <ligand>
        <name>substrate</name>
    </ligand>
</feature>
<feature type="binding site" evidence="1">
    <location>
        <position position="292"/>
    </location>
    <ligand>
        <name>Fe cation</name>
        <dbReference type="ChEBI" id="CHEBI:24875"/>
    </ligand>
</feature>
<organism>
    <name type="scientific">Malacoplasma penetrans (strain HF-2)</name>
    <name type="common">Mycoplasma penetrans</name>
    <dbReference type="NCBI Taxonomy" id="272633"/>
    <lineage>
        <taxon>Bacteria</taxon>
        <taxon>Bacillati</taxon>
        <taxon>Mycoplasmatota</taxon>
        <taxon>Mycoplasmoidales</taxon>
        <taxon>Mycoplasmoidaceae</taxon>
        <taxon>Malacoplasma</taxon>
    </lineage>
</organism>
<proteinExistence type="inferred from homology"/>
<name>TSAD_MALP2</name>
<accession>Q8EUQ9</accession>